<accession>Q31VL3</accession>
<keyword id="KW-0067">ATP-binding</keyword>
<keyword id="KW-0963">Cytoplasm</keyword>
<keyword id="KW-0436">Ligase</keyword>
<keyword id="KW-0547">Nucleotide-binding</keyword>
<reference key="1">
    <citation type="journal article" date="2005" name="Nucleic Acids Res.">
        <title>Genome dynamics and diversity of Shigella species, the etiologic agents of bacillary dysentery.</title>
        <authorList>
            <person name="Yang F."/>
            <person name="Yang J."/>
            <person name="Zhang X."/>
            <person name="Chen L."/>
            <person name="Jiang Y."/>
            <person name="Yan Y."/>
            <person name="Tang X."/>
            <person name="Wang J."/>
            <person name="Xiong Z."/>
            <person name="Dong J."/>
            <person name="Xue Y."/>
            <person name="Zhu Y."/>
            <person name="Xu X."/>
            <person name="Sun L."/>
            <person name="Chen S."/>
            <person name="Nie H."/>
            <person name="Peng J."/>
            <person name="Xu J."/>
            <person name="Wang Y."/>
            <person name="Yuan Z."/>
            <person name="Wen Y."/>
            <person name="Yao Z."/>
            <person name="Shen Y."/>
            <person name="Qiang B."/>
            <person name="Hou Y."/>
            <person name="Yu J."/>
            <person name="Jin Q."/>
        </authorList>
    </citation>
    <scope>NUCLEOTIDE SEQUENCE [LARGE SCALE GENOMIC DNA]</scope>
    <source>
        <strain>Sb227</strain>
    </source>
</reference>
<protein>
    <recommendedName>
        <fullName evidence="1">RNA 3'-terminal phosphate cyclase</fullName>
        <shortName evidence="1">RNA cyclase</shortName>
        <shortName evidence="1">RNA-3'-phosphate cyclase</shortName>
        <ecNumber evidence="1">6.5.1.4</ecNumber>
    </recommendedName>
</protein>
<comment type="function">
    <text evidence="1">Catalyzes the conversion of 3'-phosphate to a 2',3'-cyclic phosphodiester at the end of RNA. The mechanism of action of the enzyme occurs in 3 steps: (A) adenylation of the enzyme by ATP; (B) transfer of adenylate to an RNA-N3'P to produce RNA-N3'PP5'A; (C) and attack of the adjacent 2'-hydroxyl on the 3'-phosphorus in the diester linkage to produce the cyclic end product. The biological role of this enzyme is unknown but it is likely to function in some aspects of cellular RNA processing.</text>
</comment>
<comment type="catalytic activity">
    <reaction evidence="1">
        <text>a 3'-end 3'-phospho-ribonucleotide-RNA + ATP = a 3'-end 2',3'-cyclophospho-ribonucleotide-RNA + AMP + diphosphate</text>
        <dbReference type="Rhea" id="RHEA:23976"/>
        <dbReference type="Rhea" id="RHEA-COMP:10463"/>
        <dbReference type="Rhea" id="RHEA-COMP:10464"/>
        <dbReference type="ChEBI" id="CHEBI:30616"/>
        <dbReference type="ChEBI" id="CHEBI:33019"/>
        <dbReference type="ChEBI" id="CHEBI:83062"/>
        <dbReference type="ChEBI" id="CHEBI:83064"/>
        <dbReference type="ChEBI" id="CHEBI:456215"/>
        <dbReference type="EC" id="6.5.1.4"/>
    </reaction>
</comment>
<comment type="subcellular location">
    <subcellularLocation>
        <location evidence="1">Cytoplasm</location>
    </subcellularLocation>
</comment>
<comment type="similarity">
    <text evidence="1">Belongs to the RNA 3'-terminal cyclase family. Type 1 subfamily.</text>
</comment>
<comment type="sequence caution" evidence="2">
    <conflict type="erroneous initiation">
        <sequence resource="EMBL-CDS" id="ABB67895"/>
    </conflict>
</comment>
<sequence length="338" mass="35920">MKRMIALDGAQGEGGGQILRSALSLSMITGQPFTITSIRAGRAKPGLLRQHLTAVKAAAEICRATVEGAELGSQRLVFRPGAVRGGEYRFAIGSAGSCTLVLQTVLPALWFADGPSRVEVSGGTDNPSAPPADFIRRVLEPLLAKIGIHQQTTLLRHGFYPAGGGVVATEVSPVASFNTLQLGERGNIVQMRGEVLLAGVPRHVAEREIATLAGSFSLHEQNIHNLPRDQGPGNTVSLEVESENITERFFVVGEKRVSAEVVAAQLVKEVKRYLASPAAVGEYLADQLVLPMALAGAGEFTVAHPSCHLLTNIAVVERFLPVRFGLIEIDGVTRVSIE</sequence>
<feature type="chain" id="PRO_0000264798" description="RNA 3'-terminal phosphate cyclase">
    <location>
        <begin position="1"/>
        <end position="338"/>
    </location>
</feature>
<feature type="active site" description="Tele-AMP-histidine intermediate" evidence="1">
    <location>
        <position position="308"/>
    </location>
</feature>
<feature type="binding site" evidence="1">
    <location>
        <position position="103"/>
    </location>
    <ligand>
        <name>ATP</name>
        <dbReference type="ChEBI" id="CHEBI:30616"/>
    </ligand>
</feature>
<feature type="binding site" evidence="1">
    <location>
        <begin position="283"/>
        <end position="287"/>
    </location>
    <ligand>
        <name>ATP</name>
        <dbReference type="ChEBI" id="CHEBI:30616"/>
    </ligand>
</feature>
<organism>
    <name type="scientific">Shigella boydii serotype 4 (strain Sb227)</name>
    <dbReference type="NCBI Taxonomy" id="300268"/>
    <lineage>
        <taxon>Bacteria</taxon>
        <taxon>Pseudomonadati</taxon>
        <taxon>Pseudomonadota</taxon>
        <taxon>Gammaproteobacteria</taxon>
        <taxon>Enterobacterales</taxon>
        <taxon>Enterobacteriaceae</taxon>
        <taxon>Shigella</taxon>
    </lineage>
</organism>
<proteinExistence type="inferred from homology"/>
<gene>
    <name evidence="1" type="primary">rtcA</name>
    <name type="ordered locus">SBO_3408</name>
</gene>
<evidence type="ECO:0000255" key="1">
    <source>
        <dbReference type="HAMAP-Rule" id="MF_00200"/>
    </source>
</evidence>
<evidence type="ECO:0000305" key="2"/>
<name>RTCA_SHIBS</name>
<dbReference type="EC" id="6.5.1.4" evidence="1"/>
<dbReference type="EMBL" id="CP000036">
    <property type="protein sequence ID" value="ABB67895.1"/>
    <property type="status" value="ALT_INIT"/>
    <property type="molecule type" value="Genomic_DNA"/>
</dbReference>
<dbReference type="RefSeq" id="WP_005008830.1">
    <property type="nucleotide sequence ID" value="NC_007613.1"/>
</dbReference>
<dbReference type="SMR" id="Q31VL3"/>
<dbReference type="KEGG" id="sbo:SBO_3408"/>
<dbReference type="HOGENOM" id="CLU_027882_0_0_6"/>
<dbReference type="Proteomes" id="UP000007067">
    <property type="component" value="Chromosome"/>
</dbReference>
<dbReference type="GO" id="GO:0005737">
    <property type="term" value="C:cytoplasm"/>
    <property type="evidence" value="ECO:0007669"/>
    <property type="project" value="UniProtKB-SubCell"/>
</dbReference>
<dbReference type="GO" id="GO:0005524">
    <property type="term" value="F:ATP binding"/>
    <property type="evidence" value="ECO:0007669"/>
    <property type="project" value="UniProtKB-KW"/>
</dbReference>
<dbReference type="GO" id="GO:0003963">
    <property type="term" value="F:RNA-3'-phosphate cyclase activity"/>
    <property type="evidence" value="ECO:0007669"/>
    <property type="project" value="UniProtKB-UniRule"/>
</dbReference>
<dbReference type="GO" id="GO:0006396">
    <property type="term" value="P:RNA processing"/>
    <property type="evidence" value="ECO:0007669"/>
    <property type="project" value="InterPro"/>
</dbReference>
<dbReference type="FunFam" id="3.65.10.20:FF:000002">
    <property type="entry name" value="GM19193"/>
    <property type="match status" value="1"/>
</dbReference>
<dbReference type="FunFam" id="3.30.360.20:FF:000003">
    <property type="entry name" value="RNA 3'-terminal phosphate cyclase"/>
    <property type="match status" value="1"/>
</dbReference>
<dbReference type="Gene3D" id="3.65.10.20">
    <property type="entry name" value="RNA 3'-terminal phosphate cyclase domain"/>
    <property type="match status" value="1"/>
</dbReference>
<dbReference type="Gene3D" id="3.30.360.20">
    <property type="entry name" value="RNA 3'-terminal phosphate cyclase, insert domain"/>
    <property type="match status" value="1"/>
</dbReference>
<dbReference type="HAMAP" id="MF_00200">
    <property type="entry name" value="RTC"/>
    <property type="match status" value="1"/>
</dbReference>
<dbReference type="InterPro" id="IPR013791">
    <property type="entry name" value="RNA3'-term_phos_cycl_insert"/>
</dbReference>
<dbReference type="InterPro" id="IPR023797">
    <property type="entry name" value="RNA3'_phos_cyclase_dom"/>
</dbReference>
<dbReference type="InterPro" id="IPR037136">
    <property type="entry name" value="RNA3'_phos_cyclase_dom_sf"/>
</dbReference>
<dbReference type="InterPro" id="IPR000228">
    <property type="entry name" value="RNA3'_term_phos_cyc"/>
</dbReference>
<dbReference type="InterPro" id="IPR017770">
    <property type="entry name" value="RNA3'_term_phos_cyc_type_1"/>
</dbReference>
<dbReference type="InterPro" id="IPR020719">
    <property type="entry name" value="RNA3'_term_phos_cycl-like_CS"/>
</dbReference>
<dbReference type="InterPro" id="IPR013792">
    <property type="entry name" value="RNA3'P_cycl/enolpyr_Trfase_a/b"/>
</dbReference>
<dbReference type="InterPro" id="IPR036553">
    <property type="entry name" value="RPTC_insert"/>
</dbReference>
<dbReference type="NCBIfam" id="NF003246">
    <property type="entry name" value="PRK04204.1-2"/>
    <property type="match status" value="1"/>
</dbReference>
<dbReference type="NCBIfam" id="NF003247">
    <property type="entry name" value="PRK04204.1-3"/>
    <property type="match status" value="1"/>
</dbReference>
<dbReference type="NCBIfam" id="TIGR03399">
    <property type="entry name" value="RNA_3prim_cycl"/>
    <property type="match status" value="1"/>
</dbReference>
<dbReference type="PANTHER" id="PTHR11096">
    <property type="entry name" value="RNA 3' TERMINAL PHOSPHATE CYCLASE"/>
    <property type="match status" value="1"/>
</dbReference>
<dbReference type="PANTHER" id="PTHR11096:SF0">
    <property type="entry name" value="RNA 3'-TERMINAL PHOSPHATE CYCLASE"/>
    <property type="match status" value="1"/>
</dbReference>
<dbReference type="Pfam" id="PF01137">
    <property type="entry name" value="RTC"/>
    <property type="match status" value="1"/>
</dbReference>
<dbReference type="Pfam" id="PF05189">
    <property type="entry name" value="RTC_insert"/>
    <property type="match status" value="1"/>
</dbReference>
<dbReference type="PIRSF" id="PIRSF005378">
    <property type="entry name" value="RNA3'_term_phos_cycl_euk"/>
    <property type="match status" value="1"/>
</dbReference>
<dbReference type="SUPFAM" id="SSF55205">
    <property type="entry name" value="EPT/RTPC-like"/>
    <property type="match status" value="2"/>
</dbReference>
<dbReference type="SUPFAM" id="SSF52913">
    <property type="entry name" value="RNA 3'-terminal phosphate cyclase, RPTC, insert domain"/>
    <property type="match status" value="1"/>
</dbReference>
<dbReference type="PROSITE" id="PS01287">
    <property type="entry name" value="RTC"/>
    <property type="match status" value="1"/>
</dbReference>